<reference key="1">
    <citation type="journal article" date="2005" name="Nature">
        <title>Generation and annotation of the DNA sequences of human chromosomes 2 and 4.</title>
        <authorList>
            <person name="Hillier L.W."/>
            <person name="Graves T.A."/>
            <person name="Fulton R.S."/>
            <person name="Fulton L.A."/>
            <person name="Pepin K.H."/>
            <person name="Minx P."/>
            <person name="Wagner-McPherson C."/>
            <person name="Layman D."/>
            <person name="Wylie K."/>
            <person name="Sekhon M."/>
            <person name="Becker M.C."/>
            <person name="Fewell G.A."/>
            <person name="Delehaunty K.D."/>
            <person name="Miner T.L."/>
            <person name="Nash W.E."/>
            <person name="Kremitzki C."/>
            <person name="Oddy L."/>
            <person name="Du H."/>
            <person name="Sun H."/>
            <person name="Bradshaw-Cordum H."/>
            <person name="Ali J."/>
            <person name="Carter J."/>
            <person name="Cordes M."/>
            <person name="Harris A."/>
            <person name="Isak A."/>
            <person name="van Brunt A."/>
            <person name="Nguyen C."/>
            <person name="Du F."/>
            <person name="Courtney L."/>
            <person name="Kalicki J."/>
            <person name="Ozersky P."/>
            <person name="Abbott S."/>
            <person name="Armstrong J."/>
            <person name="Belter E.A."/>
            <person name="Caruso L."/>
            <person name="Cedroni M."/>
            <person name="Cotton M."/>
            <person name="Davidson T."/>
            <person name="Desai A."/>
            <person name="Elliott G."/>
            <person name="Erb T."/>
            <person name="Fronick C."/>
            <person name="Gaige T."/>
            <person name="Haakenson W."/>
            <person name="Haglund K."/>
            <person name="Holmes A."/>
            <person name="Harkins R."/>
            <person name="Kim K."/>
            <person name="Kruchowski S.S."/>
            <person name="Strong C.M."/>
            <person name="Grewal N."/>
            <person name="Goyea E."/>
            <person name="Hou S."/>
            <person name="Levy A."/>
            <person name="Martinka S."/>
            <person name="Mead K."/>
            <person name="McLellan M.D."/>
            <person name="Meyer R."/>
            <person name="Randall-Maher J."/>
            <person name="Tomlinson C."/>
            <person name="Dauphin-Kohlberg S."/>
            <person name="Kozlowicz-Reilly A."/>
            <person name="Shah N."/>
            <person name="Swearengen-Shahid S."/>
            <person name="Snider J."/>
            <person name="Strong J.T."/>
            <person name="Thompson J."/>
            <person name="Yoakum M."/>
            <person name="Leonard S."/>
            <person name="Pearman C."/>
            <person name="Trani L."/>
            <person name="Radionenko M."/>
            <person name="Waligorski J.E."/>
            <person name="Wang C."/>
            <person name="Rock S.M."/>
            <person name="Tin-Wollam A.-M."/>
            <person name="Maupin R."/>
            <person name="Latreille P."/>
            <person name="Wendl M.C."/>
            <person name="Yang S.-P."/>
            <person name="Pohl C."/>
            <person name="Wallis J.W."/>
            <person name="Spieth J."/>
            <person name="Bieri T.A."/>
            <person name="Berkowicz N."/>
            <person name="Nelson J.O."/>
            <person name="Osborne J."/>
            <person name="Ding L."/>
            <person name="Meyer R."/>
            <person name="Sabo A."/>
            <person name="Shotland Y."/>
            <person name="Sinha P."/>
            <person name="Wohldmann P.E."/>
            <person name="Cook L.L."/>
            <person name="Hickenbotham M.T."/>
            <person name="Eldred J."/>
            <person name="Williams D."/>
            <person name="Jones T.A."/>
            <person name="She X."/>
            <person name="Ciccarelli F.D."/>
            <person name="Izaurralde E."/>
            <person name="Taylor J."/>
            <person name="Schmutz J."/>
            <person name="Myers R.M."/>
            <person name="Cox D.R."/>
            <person name="Huang X."/>
            <person name="McPherson J.D."/>
            <person name="Mardis E.R."/>
            <person name="Clifton S.W."/>
            <person name="Warren W.C."/>
            <person name="Chinwalla A.T."/>
            <person name="Eddy S.R."/>
            <person name="Marra M.A."/>
            <person name="Ovcharenko I."/>
            <person name="Furey T.S."/>
            <person name="Miller W."/>
            <person name="Eichler E.E."/>
            <person name="Bork P."/>
            <person name="Suyama M."/>
            <person name="Torrents D."/>
            <person name="Waterston R.H."/>
            <person name="Wilson R.K."/>
        </authorList>
    </citation>
    <scope>NUCLEOTIDE SEQUENCE [LARGE SCALE GENOMIC DNA]</scope>
</reference>
<reference key="2">
    <citation type="journal article" date="2008" name="BMC Evol. Biol.">
        <title>Molecular evolution of the keratin associated protein gene family in mammals, role in the evolution of mammalian hair.</title>
        <authorList>
            <person name="Wu D.D."/>
            <person name="Irwin D.M."/>
            <person name="Zhang Y.P."/>
        </authorList>
    </citation>
    <scope>FAMILY CHARACTERIZATION</scope>
</reference>
<keyword id="KW-0416">Keratin</keyword>
<keyword id="KW-1185">Reference proteome</keyword>
<keyword id="KW-0677">Repeat</keyword>
<feature type="chain" id="PRO_0000445144" description="Small cysteine and glycine repeat-containing protein 4">
    <location>
        <begin position="1"/>
        <end position="105"/>
    </location>
</feature>
<feature type="region of interest" description="14 X 2 AA repeats of CG" evidence="2">
    <location>
        <begin position="4"/>
        <end position="87"/>
    </location>
</feature>
<evidence type="ECO:0000303" key="1">
    <source>
    </source>
</evidence>
<evidence type="ECO:0000305" key="2"/>
<evidence type="ECO:0000305" key="3">
    <source>
    </source>
</evidence>
<evidence type="ECO:0000312" key="4">
    <source>
        <dbReference type="HGNC" id="HGNC:34223"/>
    </source>
</evidence>
<proteinExistence type="evidence at protein level"/>
<protein>
    <recommendedName>
        <fullName evidence="2">Small cysteine and glycine repeat-containing protein 4</fullName>
    </recommendedName>
    <alternativeName>
        <fullName evidence="1">Keratin-associated protein 28-4</fullName>
    </alternativeName>
</protein>
<accession>A0A286YEV6</accession>
<name>SCGR4_HUMAN</name>
<dbReference type="EMBL" id="AC064853">
    <property type="status" value="NOT_ANNOTATED_CDS"/>
    <property type="molecule type" value="Genomic_DNA"/>
</dbReference>
<dbReference type="CCDS" id="CCDS92955.1"/>
<dbReference type="RefSeq" id="NP_001382334.1">
    <property type="nucleotide sequence ID" value="NM_001395405.1"/>
</dbReference>
<dbReference type="BioMuta" id="ENSG00000284631"/>
<dbReference type="MassIVE" id="A0A286YEV6"/>
<dbReference type="PeptideAtlas" id="A0A286YEV6"/>
<dbReference type="Ensembl" id="ENST00000641801.2">
    <property type="protein sequence ID" value="ENSP00000492906.1"/>
    <property type="gene ID" value="ENSG00000284631.2"/>
</dbReference>
<dbReference type="GeneID" id="112441430"/>
<dbReference type="MANE-Select" id="ENST00000641801.2">
    <property type="protein sequence ID" value="ENSP00000492906.1"/>
    <property type="RefSeq nucleotide sequence ID" value="NM_001395405.1"/>
    <property type="RefSeq protein sequence ID" value="NP_001382334.1"/>
</dbReference>
<dbReference type="AGR" id="HGNC:34223"/>
<dbReference type="GeneCards" id="SCYGR4"/>
<dbReference type="HGNC" id="HGNC:34223">
    <property type="gene designation" value="SCYGR4"/>
</dbReference>
<dbReference type="HPA" id="ENSG00000284631">
    <property type="expression patterns" value="Tissue enriched (placenta)"/>
</dbReference>
<dbReference type="neXtProt" id="NX_A0A286YEV6"/>
<dbReference type="VEuPathDB" id="HostDB:ENSG00000284631"/>
<dbReference type="GeneTree" id="ENSGT00950000184294"/>
<dbReference type="InParanoid" id="A0A286YEV6"/>
<dbReference type="OMA" id="MPVICCC"/>
<dbReference type="PAN-GO" id="A0A286YEV6">
    <property type="GO annotations" value="0 GO annotations based on evolutionary models"/>
</dbReference>
<dbReference type="Pharos" id="A0A286YEV6">
    <property type="development level" value="Tdark"/>
</dbReference>
<dbReference type="PRO" id="PR:A0A286YEV6"/>
<dbReference type="Proteomes" id="UP000005640">
    <property type="component" value="Chromosome 2"/>
</dbReference>
<dbReference type="Bgee" id="ENSG00000284631">
    <property type="expression patterns" value="Expressed in placenta and 42 other cell types or tissues"/>
</dbReference>
<dbReference type="GO" id="GO:0005882">
    <property type="term" value="C:intermediate filament"/>
    <property type="evidence" value="ECO:0007669"/>
    <property type="project" value="UniProtKB-KW"/>
</dbReference>
<comment type="function">
    <text evidence="2">In the hair cortex, hair keratin intermediate filaments are embedded in an interfilamentous matrix, consisting of hair keratin-associated proteins (KRTAP), which are essential for the formation of a rigid and resistant hair shaft through their extensive disulfide bond cross-linking with abundant cysteine residues of hair keratins. The matrix proteins include the high-sulfur and high-glycine-tyrosine keratins.</text>
</comment>
<comment type="miscellaneous">
    <text evidence="1">Human have a similar number of genes as other primates despite the relative hairlessness of humans.</text>
</comment>
<comment type="similarity">
    <text evidence="3">Belongs to the KRTAP type 28 family.</text>
</comment>
<organism>
    <name type="scientific">Homo sapiens</name>
    <name type="common">Human</name>
    <dbReference type="NCBI Taxonomy" id="9606"/>
    <lineage>
        <taxon>Eukaryota</taxon>
        <taxon>Metazoa</taxon>
        <taxon>Chordata</taxon>
        <taxon>Craniata</taxon>
        <taxon>Vertebrata</taxon>
        <taxon>Euteleostomi</taxon>
        <taxon>Mammalia</taxon>
        <taxon>Eutheria</taxon>
        <taxon>Euarchontoglires</taxon>
        <taxon>Primates</taxon>
        <taxon>Haplorrhini</taxon>
        <taxon>Catarrhini</taxon>
        <taxon>Hominidae</taxon>
        <taxon>Homo</taxon>
    </lineage>
</organism>
<gene>
    <name evidence="4" type="primary">SCYGR4</name>
    <name evidence="1" type="synonym">KRTAP28-4</name>
</gene>
<sequence length="105" mass="9792">MGCCGCGSCGGCGGRCGGGCGGGCSGGCGGGCGGGCGGGCGSCTTCRCYRVGCCSSCCPCCRGCCGGCCSTPVICCCRRTCGSCGCGYGKGCCQQKCCCQKQCCC</sequence>